<keyword id="KW-0028">Amino-acid biosynthesis</keyword>
<keyword id="KW-0055">Arginine biosynthesis</keyword>
<keyword id="KW-0963">Cytoplasm</keyword>
<keyword id="KW-0808">Transferase</keyword>
<reference key="1">
    <citation type="journal article" date="2007" name="Genome Res.">
        <title>Genome characteristics of facultatively symbiotic Frankia sp. strains reflect host range and host plant biogeography.</title>
        <authorList>
            <person name="Normand P."/>
            <person name="Lapierre P."/>
            <person name="Tisa L.S."/>
            <person name="Gogarten J.P."/>
            <person name="Alloisio N."/>
            <person name="Bagnarol E."/>
            <person name="Bassi C.A."/>
            <person name="Berry A.M."/>
            <person name="Bickhart D.M."/>
            <person name="Choisne N."/>
            <person name="Couloux A."/>
            <person name="Cournoyer B."/>
            <person name="Cruveiller S."/>
            <person name="Daubin V."/>
            <person name="Demange N."/>
            <person name="Francino M.P."/>
            <person name="Goltsman E."/>
            <person name="Huang Y."/>
            <person name="Kopp O.R."/>
            <person name="Labarre L."/>
            <person name="Lapidus A."/>
            <person name="Lavire C."/>
            <person name="Marechal J."/>
            <person name="Martinez M."/>
            <person name="Mastronunzio J.E."/>
            <person name="Mullin B.C."/>
            <person name="Niemann J."/>
            <person name="Pujic P."/>
            <person name="Rawnsley T."/>
            <person name="Rouy Z."/>
            <person name="Schenowitz C."/>
            <person name="Sellstedt A."/>
            <person name="Tavares F."/>
            <person name="Tomkins J.P."/>
            <person name="Vallenet D."/>
            <person name="Valverde C."/>
            <person name="Wall L.G."/>
            <person name="Wang Y."/>
            <person name="Medigue C."/>
            <person name="Benson D.R."/>
        </authorList>
    </citation>
    <scope>NUCLEOTIDE SEQUENCE [LARGE SCALE GENOMIC DNA]</scope>
    <source>
        <strain>EAN1pec</strain>
    </source>
</reference>
<protein>
    <recommendedName>
        <fullName evidence="2">Ornithine carbamoyltransferase</fullName>
        <shortName evidence="2">OTCase</shortName>
        <ecNumber evidence="2">2.1.3.3</ecNumber>
    </recommendedName>
</protein>
<feature type="chain" id="PRO_1000163971" description="Ornithine carbamoyltransferase">
    <location>
        <begin position="1"/>
        <end position="317"/>
    </location>
</feature>
<feature type="binding site" evidence="2">
    <location>
        <begin position="54"/>
        <end position="57"/>
    </location>
    <ligand>
        <name>carbamoyl phosphate</name>
        <dbReference type="ChEBI" id="CHEBI:58228"/>
    </ligand>
</feature>
<feature type="binding site" evidence="2">
    <location>
        <position position="81"/>
    </location>
    <ligand>
        <name>carbamoyl phosphate</name>
        <dbReference type="ChEBI" id="CHEBI:58228"/>
    </ligand>
</feature>
<feature type="binding site" evidence="2">
    <location>
        <position position="105"/>
    </location>
    <ligand>
        <name>carbamoyl phosphate</name>
        <dbReference type="ChEBI" id="CHEBI:58228"/>
    </ligand>
</feature>
<feature type="binding site" evidence="2">
    <location>
        <begin position="132"/>
        <end position="135"/>
    </location>
    <ligand>
        <name>carbamoyl phosphate</name>
        <dbReference type="ChEBI" id="CHEBI:58228"/>
    </ligand>
</feature>
<feature type="binding site" evidence="2">
    <location>
        <position position="163"/>
    </location>
    <ligand>
        <name>L-ornithine</name>
        <dbReference type="ChEBI" id="CHEBI:46911"/>
    </ligand>
</feature>
<feature type="binding site" evidence="2">
    <location>
        <position position="227"/>
    </location>
    <ligand>
        <name>L-ornithine</name>
        <dbReference type="ChEBI" id="CHEBI:46911"/>
    </ligand>
</feature>
<feature type="binding site" evidence="2">
    <location>
        <begin position="231"/>
        <end position="232"/>
    </location>
    <ligand>
        <name>L-ornithine</name>
        <dbReference type="ChEBI" id="CHEBI:46911"/>
    </ligand>
</feature>
<feature type="binding site" evidence="2">
    <location>
        <begin position="267"/>
        <end position="268"/>
    </location>
    <ligand>
        <name>carbamoyl phosphate</name>
        <dbReference type="ChEBI" id="CHEBI:58228"/>
    </ligand>
</feature>
<feature type="binding site" evidence="2">
    <location>
        <position position="295"/>
    </location>
    <ligand>
        <name>carbamoyl phosphate</name>
        <dbReference type="ChEBI" id="CHEBI:58228"/>
    </ligand>
</feature>
<sequence>MTARHFLLDTDLTSSEQAALLDLADQLKATRRDRKPARRPLEGRSVALIFEKPSTRTRLSFDVAVAELGGHPIVIDSGSSQLGRGETIEDTAAVLSRYVDAIVIRTFAQDRVDRMAAAATVPVINALSDHTHPCQALADLQTIREIRGRLAGVTLAYLGDGNNVAHSLLLAGALAGLRVHVASPPGYEPIEQVVRHANEIGAVTGGEALVTHDALEAAAGADVLYTDVWASMGQDTESDSRALVFQPYRLDEKVVEAASPDAIVMHCLPAHREMEISAAVLDGPRSVVFDQAENRLHAQKALLSFLLDETTAGVGSR</sequence>
<comment type="function">
    <text evidence="1">Reversibly catalyzes the transfer of the carbamoyl group from carbamoyl phosphate (CP) to the N(epsilon) atom of ornithine (ORN) to produce L-citrulline.</text>
</comment>
<comment type="catalytic activity">
    <reaction evidence="2">
        <text>carbamoyl phosphate + L-ornithine = L-citrulline + phosphate + H(+)</text>
        <dbReference type="Rhea" id="RHEA:19513"/>
        <dbReference type="ChEBI" id="CHEBI:15378"/>
        <dbReference type="ChEBI" id="CHEBI:43474"/>
        <dbReference type="ChEBI" id="CHEBI:46911"/>
        <dbReference type="ChEBI" id="CHEBI:57743"/>
        <dbReference type="ChEBI" id="CHEBI:58228"/>
        <dbReference type="EC" id="2.1.3.3"/>
    </reaction>
</comment>
<comment type="pathway">
    <text evidence="2">Amino-acid biosynthesis; L-arginine biosynthesis; L-arginine from L-ornithine and carbamoyl phosphate: step 1/3.</text>
</comment>
<comment type="subcellular location">
    <subcellularLocation>
        <location evidence="2">Cytoplasm</location>
    </subcellularLocation>
</comment>
<comment type="similarity">
    <text evidence="2">Belongs to the aspartate/ornithine carbamoyltransferase superfamily. OTCase family.</text>
</comment>
<proteinExistence type="inferred from homology"/>
<evidence type="ECO:0000250" key="1"/>
<evidence type="ECO:0000255" key="2">
    <source>
        <dbReference type="HAMAP-Rule" id="MF_01109"/>
    </source>
</evidence>
<organism>
    <name type="scientific">Parafrankia sp. (strain EAN1pec)</name>
    <dbReference type="NCBI Taxonomy" id="298653"/>
    <lineage>
        <taxon>Bacteria</taxon>
        <taxon>Bacillati</taxon>
        <taxon>Actinomycetota</taxon>
        <taxon>Actinomycetes</taxon>
        <taxon>Frankiales</taxon>
        <taxon>Frankiaceae</taxon>
        <taxon>Parafrankia</taxon>
    </lineage>
</organism>
<dbReference type="EC" id="2.1.3.3" evidence="2"/>
<dbReference type="EMBL" id="CP000820">
    <property type="protein sequence ID" value="ABW11179.1"/>
    <property type="molecule type" value="Genomic_DNA"/>
</dbReference>
<dbReference type="RefSeq" id="WP_020459351.1">
    <property type="nucleotide sequence ID" value="NC_009921.1"/>
</dbReference>
<dbReference type="SMR" id="A8LE44"/>
<dbReference type="STRING" id="298653.Franean1_1741"/>
<dbReference type="KEGG" id="fre:Franean1_1741"/>
<dbReference type="eggNOG" id="COG0078">
    <property type="taxonomic scope" value="Bacteria"/>
</dbReference>
<dbReference type="HOGENOM" id="CLU_043846_3_2_11"/>
<dbReference type="UniPathway" id="UPA00068">
    <property type="reaction ID" value="UER00112"/>
</dbReference>
<dbReference type="GO" id="GO:0005737">
    <property type="term" value="C:cytoplasm"/>
    <property type="evidence" value="ECO:0007669"/>
    <property type="project" value="UniProtKB-SubCell"/>
</dbReference>
<dbReference type="GO" id="GO:0016597">
    <property type="term" value="F:amino acid binding"/>
    <property type="evidence" value="ECO:0007669"/>
    <property type="project" value="InterPro"/>
</dbReference>
<dbReference type="GO" id="GO:0004585">
    <property type="term" value="F:ornithine carbamoyltransferase activity"/>
    <property type="evidence" value="ECO:0007669"/>
    <property type="project" value="UniProtKB-UniRule"/>
</dbReference>
<dbReference type="GO" id="GO:0042450">
    <property type="term" value="P:arginine biosynthetic process via ornithine"/>
    <property type="evidence" value="ECO:0007669"/>
    <property type="project" value="TreeGrafter"/>
</dbReference>
<dbReference type="GO" id="GO:0019240">
    <property type="term" value="P:citrulline biosynthetic process"/>
    <property type="evidence" value="ECO:0007669"/>
    <property type="project" value="TreeGrafter"/>
</dbReference>
<dbReference type="GO" id="GO:0006526">
    <property type="term" value="P:L-arginine biosynthetic process"/>
    <property type="evidence" value="ECO:0007669"/>
    <property type="project" value="UniProtKB-UniPathway"/>
</dbReference>
<dbReference type="FunFam" id="3.40.50.1370:FF:000008">
    <property type="entry name" value="Ornithine carbamoyltransferase"/>
    <property type="match status" value="1"/>
</dbReference>
<dbReference type="Gene3D" id="3.40.50.1370">
    <property type="entry name" value="Aspartate/ornithine carbamoyltransferase"/>
    <property type="match status" value="2"/>
</dbReference>
<dbReference type="HAMAP" id="MF_01109">
    <property type="entry name" value="OTCase"/>
    <property type="match status" value="1"/>
</dbReference>
<dbReference type="InterPro" id="IPR006132">
    <property type="entry name" value="Asp/Orn_carbamoyltranf_P-bd"/>
</dbReference>
<dbReference type="InterPro" id="IPR006130">
    <property type="entry name" value="Asp/Orn_carbamoylTrfase"/>
</dbReference>
<dbReference type="InterPro" id="IPR036901">
    <property type="entry name" value="Asp/Orn_carbamoylTrfase_sf"/>
</dbReference>
<dbReference type="InterPro" id="IPR006131">
    <property type="entry name" value="Asp_carbamoyltransf_Asp/Orn-bd"/>
</dbReference>
<dbReference type="InterPro" id="IPR002292">
    <property type="entry name" value="Orn/put_carbamltrans"/>
</dbReference>
<dbReference type="InterPro" id="IPR024904">
    <property type="entry name" value="OTCase_ArgI"/>
</dbReference>
<dbReference type="NCBIfam" id="TIGR00658">
    <property type="entry name" value="orni_carb_tr"/>
    <property type="match status" value="1"/>
</dbReference>
<dbReference type="NCBIfam" id="NF001986">
    <property type="entry name" value="PRK00779.1"/>
    <property type="match status" value="1"/>
</dbReference>
<dbReference type="PANTHER" id="PTHR45753">
    <property type="entry name" value="ORNITHINE CARBAMOYLTRANSFERASE, MITOCHONDRIAL"/>
    <property type="match status" value="1"/>
</dbReference>
<dbReference type="PANTHER" id="PTHR45753:SF3">
    <property type="entry name" value="ORNITHINE TRANSCARBAMYLASE, MITOCHONDRIAL"/>
    <property type="match status" value="1"/>
</dbReference>
<dbReference type="Pfam" id="PF00185">
    <property type="entry name" value="OTCace"/>
    <property type="match status" value="1"/>
</dbReference>
<dbReference type="Pfam" id="PF02729">
    <property type="entry name" value="OTCace_N"/>
    <property type="match status" value="1"/>
</dbReference>
<dbReference type="PRINTS" id="PR00100">
    <property type="entry name" value="AOTCASE"/>
</dbReference>
<dbReference type="PRINTS" id="PR00102">
    <property type="entry name" value="OTCASE"/>
</dbReference>
<dbReference type="SUPFAM" id="SSF53671">
    <property type="entry name" value="Aspartate/ornithine carbamoyltransferase"/>
    <property type="match status" value="1"/>
</dbReference>
<dbReference type="PROSITE" id="PS00097">
    <property type="entry name" value="CARBAMOYLTRANSFERASE"/>
    <property type="match status" value="1"/>
</dbReference>
<gene>
    <name evidence="2" type="primary">argF</name>
    <name type="ordered locus">Franean1_1741</name>
</gene>
<name>OTC_PARS2</name>
<accession>A8LE44</accession>